<protein>
    <recommendedName>
        <fullName evidence="1">UPF0182 protein Rv3193c</fullName>
    </recommendedName>
</protein>
<gene>
    <name type="ordered locus">Rv3193c</name>
    <name type="ORF">MTV014.37c</name>
</gene>
<comment type="subcellular location">
    <subcellularLocation>
        <location evidence="1">Cell membrane</location>
        <topology evidence="1">Multi-pass membrane protein</topology>
    </subcellularLocation>
</comment>
<comment type="similarity">
    <text evidence="1">Belongs to the UPF0182 family.</text>
</comment>
<organism>
    <name type="scientific">Mycobacterium tuberculosis (strain ATCC 25618 / H37Rv)</name>
    <dbReference type="NCBI Taxonomy" id="83332"/>
    <lineage>
        <taxon>Bacteria</taxon>
        <taxon>Bacillati</taxon>
        <taxon>Actinomycetota</taxon>
        <taxon>Actinomycetes</taxon>
        <taxon>Mycobacteriales</taxon>
        <taxon>Mycobacteriaceae</taxon>
        <taxon>Mycobacterium</taxon>
        <taxon>Mycobacterium tuberculosis complex</taxon>
    </lineage>
</organism>
<keyword id="KW-1003">Cell membrane</keyword>
<keyword id="KW-0472">Membrane</keyword>
<keyword id="KW-1185">Reference proteome</keyword>
<keyword id="KW-0812">Transmembrane</keyword>
<keyword id="KW-1133">Transmembrane helix</keyword>
<name>Y3193_MYCTU</name>
<dbReference type="EMBL" id="AL123456">
    <property type="protein sequence ID" value="CCP46005.1"/>
    <property type="molecule type" value="Genomic_DNA"/>
</dbReference>
<dbReference type="PIR" id="G70950">
    <property type="entry name" value="G70950"/>
</dbReference>
<dbReference type="RefSeq" id="NP_217709.1">
    <property type="nucleotide sequence ID" value="NC_000962.3"/>
</dbReference>
<dbReference type="RefSeq" id="WP_003899961.1">
    <property type="nucleotide sequence ID" value="NZ_NVQJ01000003.1"/>
</dbReference>
<dbReference type="SMR" id="P9WFL3"/>
<dbReference type="STRING" id="83332.Rv3193c"/>
<dbReference type="PaxDb" id="83332-Rv3193c"/>
<dbReference type="DNASU" id="888012"/>
<dbReference type="GeneID" id="888012"/>
<dbReference type="KEGG" id="mtu:Rv3193c"/>
<dbReference type="KEGG" id="mtv:RVBD_3193c"/>
<dbReference type="TubercuList" id="Rv3193c"/>
<dbReference type="eggNOG" id="COG1615">
    <property type="taxonomic scope" value="Bacteria"/>
</dbReference>
<dbReference type="InParanoid" id="P9WFL3"/>
<dbReference type="OrthoDB" id="9763654at2"/>
<dbReference type="PhylomeDB" id="P9WFL3"/>
<dbReference type="Proteomes" id="UP000001584">
    <property type="component" value="Chromosome"/>
</dbReference>
<dbReference type="GO" id="GO:0005576">
    <property type="term" value="C:extracellular region"/>
    <property type="evidence" value="ECO:0007005"/>
    <property type="project" value="MTBBASE"/>
</dbReference>
<dbReference type="GO" id="GO:0009274">
    <property type="term" value="C:peptidoglycan-based cell wall"/>
    <property type="evidence" value="ECO:0007005"/>
    <property type="project" value="MTBBASE"/>
</dbReference>
<dbReference type="GO" id="GO:0005886">
    <property type="term" value="C:plasma membrane"/>
    <property type="evidence" value="ECO:0007005"/>
    <property type="project" value="MTBBASE"/>
</dbReference>
<dbReference type="HAMAP" id="MF_01600">
    <property type="entry name" value="UPF0182"/>
    <property type="match status" value="1"/>
</dbReference>
<dbReference type="InterPro" id="IPR005372">
    <property type="entry name" value="UPF0182"/>
</dbReference>
<dbReference type="NCBIfam" id="NF000825">
    <property type="entry name" value="PRK00068.1"/>
    <property type="match status" value="1"/>
</dbReference>
<dbReference type="NCBIfam" id="NF009097">
    <property type="entry name" value="PRK12438.1"/>
    <property type="match status" value="1"/>
</dbReference>
<dbReference type="PANTHER" id="PTHR39344">
    <property type="entry name" value="UPF0182 PROTEIN SLL1060"/>
    <property type="match status" value="1"/>
</dbReference>
<dbReference type="PANTHER" id="PTHR39344:SF1">
    <property type="entry name" value="UPF0182 PROTEIN SLL1060"/>
    <property type="match status" value="1"/>
</dbReference>
<dbReference type="Pfam" id="PF03699">
    <property type="entry name" value="UPF0182"/>
    <property type="match status" value="1"/>
</dbReference>
<evidence type="ECO:0000255" key="1">
    <source>
        <dbReference type="HAMAP-Rule" id="MF_01600"/>
    </source>
</evidence>
<evidence type="ECO:0000256" key="2">
    <source>
        <dbReference type="SAM" id="MobiDB-lite"/>
    </source>
</evidence>
<proteinExistence type="evidence at protein level"/>
<sequence length="992" mass="107502">MGMRSAARMPKLTRRSRILIMIALGVIVLLLAGPRLIDAYVDWLWFGELGYRSVFTTMLATRIVVCLVAGVVVGGIVFGGLALAYRTRPVFVPDADNDPVARYRAVVLARLRLVGIGIPAAIGLLAGIVAQSYWARIQLFLHGGDFGVRDPQFGRDLGFYAFELPFYRLMLSYMLVSVFLAFVANLVAHYIFGGIRLSGRTGALSRSARVQLVSLVGVLVLLKAVAYWLDRYELLSHTRGGKPFTGAGYTDINAVLPAKLILMAIALICAAAVFSAIALRDLRIPAIGLVLLLLSSLIVGAGWPLIVEQISVKPNAAQKESEYISRSITATRQAYGLTSDVVTYRNYSGDSPATAQQVAADRATTSNIRLLDPTIVSPAFTQFQQGKNFYYFPDQLSIDRYLDRNGNLRDYVVAARELNPDRLIDNQRDWINRHTVYTHGNGFIASPANTVRGIANDPNQNGGYPEFLVNVVGANGTVVSDGPAPLDQPRIYFGPVISNTSADYAIVGRNGDDREYDYETNIDTKRYTYTGSGGVPLGGWLARSVFAAKFAERNFLFSNVIGSNSKILFNRDPAQRVEAVAPWLTTDSAVYPAIVNKRLVWIVDGYTTLDNYPYSELTSLSSATADSNEVAFNRLVPDKKVSYIRNSVKATVDAYDGTVTLYQQDEKDPVLKAWMQVFPGTVKPKSDIAPELAEHLRYPEDLFKVQRMLLAKYHVNDPVTFFSTSDFWDVPLDPNPTASSYQPPYYIVAKNIAKDDNSASYQLISAMNRFKRDYLAAYISASSDPATYGNLTVLTIPGQVNGPKLANNAITTDPAVSQDLGVIGRDNQNRIRWGNLLTLPVARGGLLYVEPVYASPGASDAASSYPRLIRVAMMYNDKVGYGPTVRDALTGLFGPGAGATATGIAPTEAAVPPSPAANPPPPASGPQPPPVTAAPPVPVGAVTLSPAKVAALQEIQAAIGAARDAQKKGDFAAYGSALQRLDEAITKFNDAG</sequence>
<feature type="chain" id="PRO_0000157724" description="UPF0182 protein Rv3193c">
    <location>
        <begin position="1"/>
        <end position="992"/>
    </location>
</feature>
<feature type="transmembrane region" description="Helical" evidence="1">
    <location>
        <begin position="17"/>
        <end position="39"/>
    </location>
</feature>
<feature type="transmembrane region" description="Helical" evidence="1">
    <location>
        <begin position="59"/>
        <end position="81"/>
    </location>
</feature>
<feature type="transmembrane region" description="Helical" evidence="1">
    <location>
        <begin position="113"/>
        <end position="135"/>
    </location>
</feature>
<feature type="transmembrane region" description="Helical" evidence="1">
    <location>
        <begin position="169"/>
        <end position="191"/>
    </location>
</feature>
<feature type="transmembrane region" description="Helical" evidence="1">
    <location>
        <begin position="212"/>
        <end position="229"/>
    </location>
</feature>
<feature type="transmembrane region" description="Helical" evidence="1">
    <location>
        <begin position="255"/>
        <end position="277"/>
    </location>
</feature>
<feature type="transmembrane region" description="Helical" evidence="1">
    <location>
        <begin position="284"/>
        <end position="306"/>
    </location>
</feature>
<feature type="region of interest" description="Disordered" evidence="2">
    <location>
        <begin position="906"/>
        <end position="938"/>
    </location>
</feature>
<feature type="compositionally biased region" description="Pro residues" evidence="2">
    <location>
        <begin position="912"/>
        <end position="938"/>
    </location>
</feature>
<accession>P9WFL3</accession>
<accession>L0TEL2</accession>
<accession>O53339</accession>
<reference key="1">
    <citation type="journal article" date="1998" name="Nature">
        <title>Deciphering the biology of Mycobacterium tuberculosis from the complete genome sequence.</title>
        <authorList>
            <person name="Cole S.T."/>
            <person name="Brosch R."/>
            <person name="Parkhill J."/>
            <person name="Garnier T."/>
            <person name="Churcher C.M."/>
            <person name="Harris D.E."/>
            <person name="Gordon S.V."/>
            <person name="Eiglmeier K."/>
            <person name="Gas S."/>
            <person name="Barry C.E. III"/>
            <person name="Tekaia F."/>
            <person name="Badcock K."/>
            <person name="Basham D."/>
            <person name="Brown D."/>
            <person name="Chillingworth T."/>
            <person name="Connor R."/>
            <person name="Davies R.M."/>
            <person name="Devlin K."/>
            <person name="Feltwell T."/>
            <person name="Gentles S."/>
            <person name="Hamlin N."/>
            <person name="Holroyd S."/>
            <person name="Hornsby T."/>
            <person name="Jagels K."/>
            <person name="Krogh A."/>
            <person name="McLean J."/>
            <person name="Moule S."/>
            <person name="Murphy L.D."/>
            <person name="Oliver S."/>
            <person name="Osborne J."/>
            <person name="Quail M.A."/>
            <person name="Rajandream M.A."/>
            <person name="Rogers J."/>
            <person name="Rutter S."/>
            <person name="Seeger K."/>
            <person name="Skelton S."/>
            <person name="Squares S."/>
            <person name="Squares R."/>
            <person name="Sulston J.E."/>
            <person name="Taylor K."/>
            <person name="Whitehead S."/>
            <person name="Barrell B.G."/>
        </authorList>
    </citation>
    <scope>NUCLEOTIDE SEQUENCE [LARGE SCALE GENOMIC DNA]</scope>
    <source>
        <strain>ATCC 25618 / H37Rv</strain>
    </source>
</reference>
<reference key="2">
    <citation type="journal article" date="2011" name="Mol. Cell. Proteomics">
        <title>Proteogenomic analysis of Mycobacterium tuberculosis by high resolution mass spectrometry.</title>
        <authorList>
            <person name="Kelkar D.S."/>
            <person name="Kumar D."/>
            <person name="Kumar P."/>
            <person name="Balakrishnan L."/>
            <person name="Muthusamy B."/>
            <person name="Yadav A.K."/>
            <person name="Shrivastava P."/>
            <person name="Marimuthu A."/>
            <person name="Anand S."/>
            <person name="Sundaram H."/>
            <person name="Kingsbury R."/>
            <person name="Harsha H.C."/>
            <person name="Nair B."/>
            <person name="Prasad T.S."/>
            <person name="Chauhan D.S."/>
            <person name="Katoch K."/>
            <person name="Katoch V.M."/>
            <person name="Kumar P."/>
            <person name="Chaerkady R."/>
            <person name="Ramachandran S."/>
            <person name="Dash D."/>
            <person name="Pandey A."/>
        </authorList>
    </citation>
    <scope>IDENTIFICATION BY MASS SPECTROMETRY [LARGE SCALE ANALYSIS]</scope>
    <source>
        <strain>ATCC 25618 / H37Rv</strain>
    </source>
</reference>